<proteinExistence type="inferred from homology"/>
<organism>
    <name type="scientific">Psychrobacter cryohalolentis (strain ATCC BAA-1226 / DSM 17306 / VKM B-2378 / K5)</name>
    <dbReference type="NCBI Taxonomy" id="335284"/>
    <lineage>
        <taxon>Bacteria</taxon>
        <taxon>Pseudomonadati</taxon>
        <taxon>Pseudomonadota</taxon>
        <taxon>Gammaproteobacteria</taxon>
        <taxon>Moraxellales</taxon>
        <taxon>Moraxellaceae</taxon>
        <taxon>Psychrobacter</taxon>
    </lineage>
</organism>
<accession>Q1Q8P9</accession>
<protein>
    <recommendedName>
        <fullName evidence="1">DNA-directed RNA polymerase subunit beta</fullName>
        <shortName evidence="1">RNAP subunit beta</shortName>
        <ecNumber evidence="1">2.7.7.6</ecNumber>
    </recommendedName>
    <alternativeName>
        <fullName evidence="1">RNA polymerase subunit beta</fullName>
    </alternativeName>
    <alternativeName>
        <fullName evidence="1">Transcriptase subunit beta</fullName>
    </alternativeName>
</protein>
<name>RPOB_PSYCK</name>
<feature type="chain" id="PRO_0000300378" description="DNA-directed RNA polymerase subunit beta">
    <location>
        <begin position="1"/>
        <end position="1372"/>
    </location>
</feature>
<gene>
    <name evidence="1" type="primary">rpoB</name>
    <name type="ordered locus">Pcryo_2177</name>
</gene>
<reference key="1">
    <citation type="submission" date="2006-03" db="EMBL/GenBank/DDBJ databases">
        <title>Complete sequence of chromosome of Psychrobacter cryohalolentis K5.</title>
        <authorList>
            <consortium name="US DOE Joint Genome Institute"/>
            <person name="Copeland A."/>
            <person name="Lucas S."/>
            <person name="Lapidus A."/>
            <person name="Barry K."/>
            <person name="Detter J.C."/>
            <person name="Glavina T."/>
            <person name="Hammon N."/>
            <person name="Israni S."/>
            <person name="Dalin E."/>
            <person name="Tice H."/>
            <person name="Pitluck S."/>
            <person name="Brettin T."/>
            <person name="Bruce D."/>
            <person name="Han C."/>
            <person name="Tapia R."/>
            <person name="Sims D.R."/>
            <person name="Gilna P."/>
            <person name="Schmutz J."/>
            <person name="Larimer F."/>
            <person name="Land M."/>
            <person name="Hauser L."/>
            <person name="Kyrpides N."/>
            <person name="Kim E."/>
            <person name="Richardson P."/>
        </authorList>
    </citation>
    <scope>NUCLEOTIDE SEQUENCE [LARGE SCALE GENOMIC DNA]</scope>
    <source>
        <strain>ATCC BAA-1226 / DSM 17306 / VKM B-2378 / K5</strain>
    </source>
</reference>
<evidence type="ECO:0000255" key="1">
    <source>
        <dbReference type="HAMAP-Rule" id="MF_01321"/>
    </source>
</evidence>
<comment type="function">
    <text evidence="1">DNA-dependent RNA polymerase catalyzes the transcription of DNA into RNA using the four ribonucleoside triphosphates as substrates.</text>
</comment>
<comment type="catalytic activity">
    <reaction evidence="1">
        <text>RNA(n) + a ribonucleoside 5'-triphosphate = RNA(n+1) + diphosphate</text>
        <dbReference type="Rhea" id="RHEA:21248"/>
        <dbReference type="Rhea" id="RHEA-COMP:14527"/>
        <dbReference type="Rhea" id="RHEA-COMP:17342"/>
        <dbReference type="ChEBI" id="CHEBI:33019"/>
        <dbReference type="ChEBI" id="CHEBI:61557"/>
        <dbReference type="ChEBI" id="CHEBI:140395"/>
        <dbReference type="EC" id="2.7.7.6"/>
    </reaction>
</comment>
<comment type="subunit">
    <text evidence="1">The RNAP catalytic core consists of 2 alpha, 1 beta, 1 beta' and 1 omega subunit. When a sigma factor is associated with the core the holoenzyme is formed, which can initiate transcription.</text>
</comment>
<comment type="similarity">
    <text evidence="1">Belongs to the RNA polymerase beta chain family.</text>
</comment>
<keyword id="KW-0240">DNA-directed RNA polymerase</keyword>
<keyword id="KW-0548">Nucleotidyltransferase</keyword>
<keyword id="KW-0804">Transcription</keyword>
<keyword id="KW-0808">Transferase</keyword>
<sequence>MAYSYTEKKRIRKSFAELPTVMDIPYLLSIQVDSYEQFLQEHKKPKARENTGLQAAYSSIFPIESHSGNAELQFVEYYLGTPEFDERECILRGSTFAAPMRVKIRLIIKDKDSKDKDSKAAIKDIREQSVYMGEMPLMTANGTFIINGTERVIVSQLHRSPGVFFDHDKGKSHSSGKVLYNARIIPYRGSWLDFEFDAKDLVFARIDRRRKLLASIILRALGLSTSEILDLFFDKVRVYKGEEQFEIDLVADRLRGEMAQFDIVTPAGDVVVEQGKRINARRIRQLEEAGMTKISIPDEYLYERILAEDIIVNDEVIARANTLIDHELLVKLSAFEASESIKEFSILFTNDIDQGSYIADTLRADSTSSREEALIEIYKVMRPGEPPTVETAEKLFDSMFFNADRYDLSNVGRMKFNRRLGLDFVDTDDADIQRERSVLTNADIVNVLKELIEIRNGRGEVDDIDHLGNRRIRSVGEMAENQFRVGLVRVERAVKERLSSAESDNLSPQDLINSKPVAAAVKEFFGSSQLSQFMDQNNPLSEVTHKRRVSALGPGGLTRERAGFEVRDVHDTHYGRVCPIETPEGPNIGLINSLATFAKTNSFGFLETPYRRVVDGKVTDVIEYLSAIEEVGTVIAQADSPVTADGALSDEMVSVRSYGEFVRMPPEKVTHMDVSPSQVVSVAAGLIPFLEHDDANRALMGSNMQRQAVPTLRADKPLVGTGMERHVARDSGVCVIAKRGGVIEDVDASRVVVRVNEDEMIAGEAGIDIYNLVKYTRSNQNTCINQRIIVNQGDAIAVGDILADGPSTDLGELALGQNIRIAFMPWNGYNFEDSILLSEKVVKEDRFTTIHIQELTCVARDTKLGTEEITADIPNVGEAALSSLDEAGIVYIGAEVDAGDILVGKVTPKGETQLTPEEKLLRAIFGEKAADVKDTSLRVPTSSKGTVIDVQVFTRDGVEKDARARAIEKSQLDSYRKDLKEELRIFEEAARGRIGNLLDGQKVSGGSGLKAGTVMALADMKDMSLETLLDIQPVEEEISERLTQIAEYLVDKQKDIDVKFAEKKRKLTAGDDLQHGVQKIVKVYLAVKRRIQPGDKMAGRHGNKGVVSRIMPVEDMPYDENGNTVDIVLNPLGVPSRMNIGQVLETHLGMAAKGLGEKIDGMLKSQAAIKDLRDFLDKIYNQVGGEQVDLDSLSDDDIMALADNLRAGVPMGTAVFDGARESQVKDLLELAGMDRDGQQTLYDGRTGQKFDRKVTVGYMYMLKLNHLVDDKMHARSTGSYSLVTQQPLGGKAQFGGQRFGEMEVWALEAYGATYTLQEMLTVKSDDVEGRTRMYKNIVDGEQYMDPGMPESFNVLTKEIKSLGINIELKQSN</sequence>
<dbReference type="EC" id="2.7.7.6" evidence="1"/>
<dbReference type="EMBL" id="CP000323">
    <property type="protein sequence ID" value="ABE75954.1"/>
    <property type="molecule type" value="Genomic_DNA"/>
</dbReference>
<dbReference type="RefSeq" id="WP_011514490.1">
    <property type="nucleotide sequence ID" value="NC_007969.1"/>
</dbReference>
<dbReference type="SMR" id="Q1Q8P9"/>
<dbReference type="STRING" id="335284.Pcryo_2177"/>
<dbReference type="KEGG" id="pcr:Pcryo_2177"/>
<dbReference type="eggNOG" id="COG0085">
    <property type="taxonomic scope" value="Bacteria"/>
</dbReference>
<dbReference type="HOGENOM" id="CLU_000524_4_3_6"/>
<dbReference type="Proteomes" id="UP000002425">
    <property type="component" value="Chromosome"/>
</dbReference>
<dbReference type="GO" id="GO:0000428">
    <property type="term" value="C:DNA-directed RNA polymerase complex"/>
    <property type="evidence" value="ECO:0007669"/>
    <property type="project" value="UniProtKB-KW"/>
</dbReference>
<dbReference type="GO" id="GO:0003677">
    <property type="term" value="F:DNA binding"/>
    <property type="evidence" value="ECO:0007669"/>
    <property type="project" value="UniProtKB-UniRule"/>
</dbReference>
<dbReference type="GO" id="GO:0003899">
    <property type="term" value="F:DNA-directed RNA polymerase activity"/>
    <property type="evidence" value="ECO:0007669"/>
    <property type="project" value="UniProtKB-UniRule"/>
</dbReference>
<dbReference type="GO" id="GO:0032549">
    <property type="term" value="F:ribonucleoside binding"/>
    <property type="evidence" value="ECO:0007669"/>
    <property type="project" value="InterPro"/>
</dbReference>
<dbReference type="GO" id="GO:0006351">
    <property type="term" value="P:DNA-templated transcription"/>
    <property type="evidence" value="ECO:0007669"/>
    <property type="project" value="UniProtKB-UniRule"/>
</dbReference>
<dbReference type="CDD" id="cd00653">
    <property type="entry name" value="RNA_pol_B_RPB2"/>
    <property type="match status" value="1"/>
</dbReference>
<dbReference type="FunFam" id="2.40.50.100:FF:000006">
    <property type="entry name" value="DNA-directed RNA polymerase subunit beta"/>
    <property type="match status" value="1"/>
</dbReference>
<dbReference type="FunFam" id="2.40.50.150:FF:000001">
    <property type="entry name" value="DNA-directed RNA polymerase subunit beta"/>
    <property type="match status" value="1"/>
</dbReference>
<dbReference type="FunFam" id="3.90.1110.10:FF:000001">
    <property type="entry name" value="DNA-directed RNA polymerase subunit beta"/>
    <property type="match status" value="1"/>
</dbReference>
<dbReference type="FunFam" id="3.90.1800.10:FF:000001">
    <property type="entry name" value="DNA-directed RNA polymerase subunit beta"/>
    <property type="match status" value="1"/>
</dbReference>
<dbReference type="Gene3D" id="2.40.50.100">
    <property type="match status" value="1"/>
</dbReference>
<dbReference type="Gene3D" id="2.40.50.150">
    <property type="match status" value="1"/>
</dbReference>
<dbReference type="Gene3D" id="3.90.1100.10">
    <property type="match status" value="2"/>
</dbReference>
<dbReference type="Gene3D" id="2.30.150.10">
    <property type="entry name" value="DNA-directed RNA polymerase, beta subunit, external 1 domain"/>
    <property type="match status" value="1"/>
</dbReference>
<dbReference type="Gene3D" id="2.40.270.10">
    <property type="entry name" value="DNA-directed RNA polymerase, subunit 2, domain 6"/>
    <property type="match status" value="1"/>
</dbReference>
<dbReference type="Gene3D" id="3.90.1800.10">
    <property type="entry name" value="RNA polymerase alpha subunit dimerisation domain"/>
    <property type="match status" value="1"/>
</dbReference>
<dbReference type="Gene3D" id="3.90.1110.10">
    <property type="entry name" value="RNA polymerase Rpb2, domain 2"/>
    <property type="match status" value="1"/>
</dbReference>
<dbReference type="HAMAP" id="MF_01321">
    <property type="entry name" value="RNApol_bact_RpoB"/>
    <property type="match status" value="1"/>
</dbReference>
<dbReference type="InterPro" id="IPR042107">
    <property type="entry name" value="DNA-dir_RNA_pol_bsu_ext_1_sf"/>
</dbReference>
<dbReference type="InterPro" id="IPR019462">
    <property type="entry name" value="DNA-dir_RNA_pol_bsu_external_1"/>
</dbReference>
<dbReference type="InterPro" id="IPR015712">
    <property type="entry name" value="DNA-dir_RNA_pol_su2"/>
</dbReference>
<dbReference type="InterPro" id="IPR007120">
    <property type="entry name" value="DNA-dir_RNAP_su2_dom"/>
</dbReference>
<dbReference type="InterPro" id="IPR037033">
    <property type="entry name" value="DNA-dir_RNAP_su2_hyb_sf"/>
</dbReference>
<dbReference type="InterPro" id="IPR010243">
    <property type="entry name" value="RNA_pol_bsu_bac"/>
</dbReference>
<dbReference type="InterPro" id="IPR007121">
    <property type="entry name" value="RNA_pol_bsu_CS"/>
</dbReference>
<dbReference type="InterPro" id="IPR007644">
    <property type="entry name" value="RNA_pol_bsu_protrusion"/>
</dbReference>
<dbReference type="InterPro" id="IPR007642">
    <property type="entry name" value="RNA_pol_Rpb2_2"/>
</dbReference>
<dbReference type="InterPro" id="IPR037034">
    <property type="entry name" value="RNA_pol_Rpb2_2_sf"/>
</dbReference>
<dbReference type="InterPro" id="IPR007645">
    <property type="entry name" value="RNA_pol_Rpb2_3"/>
</dbReference>
<dbReference type="InterPro" id="IPR007641">
    <property type="entry name" value="RNA_pol_Rpb2_7"/>
</dbReference>
<dbReference type="InterPro" id="IPR014724">
    <property type="entry name" value="RNA_pol_RPB2_OB-fold"/>
</dbReference>
<dbReference type="NCBIfam" id="NF001616">
    <property type="entry name" value="PRK00405.1"/>
    <property type="match status" value="1"/>
</dbReference>
<dbReference type="NCBIfam" id="TIGR02013">
    <property type="entry name" value="rpoB"/>
    <property type="match status" value="1"/>
</dbReference>
<dbReference type="PANTHER" id="PTHR20856">
    <property type="entry name" value="DNA-DIRECTED RNA POLYMERASE I SUBUNIT 2"/>
    <property type="match status" value="1"/>
</dbReference>
<dbReference type="Pfam" id="PF04563">
    <property type="entry name" value="RNA_pol_Rpb2_1"/>
    <property type="match status" value="1"/>
</dbReference>
<dbReference type="Pfam" id="PF04561">
    <property type="entry name" value="RNA_pol_Rpb2_2"/>
    <property type="match status" value="2"/>
</dbReference>
<dbReference type="Pfam" id="PF04565">
    <property type="entry name" value="RNA_pol_Rpb2_3"/>
    <property type="match status" value="1"/>
</dbReference>
<dbReference type="Pfam" id="PF10385">
    <property type="entry name" value="RNA_pol_Rpb2_45"/>
    <property type="match status" value="1"/>
</dbReference>
<dbReference type="Pfam" id="PF00562">
    <property type="entry name" value="RNA_pol_Rpb2_6"/>
    <property type="match status" value="1"/>
</dbReference>
<dbReference type="Pfam" id="PF04560">
    <property type="entry name" value="RNA_pol_Rpb2_7"/>
    <property type="match status" value="1"/>
</dbReference>
<dbReference type="SUPFAM" id="SSF64484">
    <property type="entry name" value="beta and beta-prime subunits of DNA dependent RNA-polymerase"/>
    <property type="match status" value="1"/>
</dbReference>
<dbReference type="PROSITE" id="PS01166">
    <property type="entry name" value="RNA_POL_BETA"/>
    <property type="match status" value="1"/>
</dbReference>